<keyword id="KW-0007">Acetylation</keyword>
<keyword id="KW-0025">Alternative splicing</keyword>
<keyword id="KW-0256">Endoplasmic reticulum</keyword>
<keyword id="KW-0325">Glycoprotein</keyword>
<keyword id="KW-0333">Golgi apparatus</keyword>
<keyword id="KW-0472">Membrane</keyword>
<keyword id="KW-1185">Reference proteome</keyword>
<keyword id="KW-0812">Transmembrane</keyword>
<keyword id="KW-1133">Transmembrane helix</keyword>
<comment type="function">
    <text evidence="1 6">Required for the lipid transport activity of the ALA/ALIS P4-ATPase complex.</text>
</comment>
<comment type="subunit">
    <text evidence="5 6">Interacts with ALA2 and ALA3 in a heterologous system.</text>
</comment>
<comment type="subcellular location">
    <subcellularLocation>
        <location evidence="6">Golgi apparatus membrane</location>
        <topology evidence="6">Multi-pass membrane protein</topology>
    </subcellularLocation>
    <subcellularLocation>
        <location evidence="6">Prevacuolar compartment membrane</location>
        <topology evidence="6">Multi-pass membrane protein</topology>
    </subcellularLocation>
    <subcellularLocation>
        <location evidence="6">Endoplasmic reticulum membrane</location>
        <topology evidence="6">Multi-pass membrane protein</topology>
    </subcellularLocation>
    <text>In a heterologous system, the final intracellular localization after exit from the endoplasmic reticulum is the prevacuolar compartment in the presence of ALA2 and the Golgi in the presence of ALA3.</text>
</comment>
<comment type="alternative products">
    <event type="alternative splicing"/>
    <isoform>
        <id>Q8L8W0-1</id>
        <name>1</name>
        <sequence type="displayed"/>
    </isoform>
    <isoform>
        <id>Q8L8W0-2</id>
        <name>2</name>
        <sequence type="described" ref="VSP_036590 VSP_036591"/>
    </isoform>
</comment>
<comment type="tissue specificity">
    <text evidence="5">Expressed in roots, leaves, stems, flowers and siliques.</text>
</comment>
<comment type="similarity">
    <text evidence="8">Belongs to the CDC50/LEM3 family.</text>
</comment>
<comment type="sequence caution" evidence="8">
    <conflict type="erroneous gene model prediction">
        <sequence resource="EMBL-CDS" id="AAD30230"/>
    </conflict>
</comment>
<comment type="sequence caution" evidence="8">
    <conflict type="frameshift">
        <sequence resource="EMBL" id="BX816946"/>
    </conflict>
</comment>
<name>ALIS5_ARATH</name>
<dbReference type="EMBL" id="AC007202">
    <property type="protein sequence ID" value="AAD30230.1"/>
    <property type="status" value="ALT_SEQ"/>
    <property type="molecule type" value="Genomic_DNA"/>
</dbReference>
<dbReference type="EMBL" id="CP002684">
    <property type="protein sequence ID" value="AEE36244.1"/>
    <property type="molecule type" value="Genomic_DNA"/>
</dbReference>
<dbReference type="EMBL" id="CP002684">
    <property type="protein sequence ID" value="AEE36245.1"/>
    <property type="molecule type" value="Genomic_DNA"/>
</dbReference>
<dbReference type="EMBL" id="AY088777">
    <property type="protein sequence ID" value="AAM67090.1"/>
    <property type="molecule type" value="mRNA"/>
</dbReference>
<dbReference type="EMBL" id="BX816946">
    <property type="status" value="NOT_ANNOTATED_CDS"/>
    <property type="molecule type" value="mRNA"/>
</dbReference>
<dbReference type="PIR" id="F96825">
    <property type="entry name" value="F96825"/>
</dbReference>
<dbReference type="RefSeq" id="NP_565210.1">
    <molecule id="Q8L8W0-1"/>
    <property type="nucleotide sequence ID" value="NM_106593.4"/>
</dbReference>
<dbReference type="RefSeq" id="NP_974175.1">
    <molecule id="Q8L8W0-2"/>
    <property type="nucleotide sequence ID" value="NM_202446.1"/>
</dbReference>
<dbReference type="SMR" id="Q8L8W0"/>
<dbReference type="FunCoup" id="Q8L8W0">
    <property type="interactions" value="2841"/>
</dbReference>
<dbReference type="STRING" id="3702.Q8L8W0"/>
<dbReference type="GlyCosmos" id="Q8L8W0">
    <property type="glycosylation" value="2 sites, No reported glycans"/>
</dbReference>
<dbReference type="GlyGen" id="Q8L8W0">
    <property type="glycosylation" value="2 sites"/>
</dbReference>
<dbReference type="PaxDb" id="3702-AT1G79450.1"/>
<dbReference type="ProteomicsDB" id="244938">
    <molecule id="Q8L8W0-1"/>
</dbReference>
<dbReference type="EnsemblPlants" id="AT1G79450.1">
    <molecule id="Q8L8W0-1"/>
    <property type="protein sequence ID" value="AT1G79450.1"/>
    <property type="gene ID" value="AT1G79450"/>
</dbReference>
<dbReference type="EnsemblPlants" id="AT1G79450.2">
    <molecule id="Q8L8W0-2"/>
    <property type="protein sequence ID" value="AT1G79450.2"/>
    <property type="gene ID" value="AT1G79450"/>
</dbReference>
<dbReference type="GeneID" id="844283"/>
<dbReference type="Gramene" id="AT1G79450.1">
    <molecule id="Q8L8W0-1"/>
    <property type="protein sequence ID" value="AT1G79450.1"/>
    <property type="gene ID" value="AT1G79450"/>
</dbReference>
<dbReference type="Gramene" id="AT1G79450.2">
    <molecule id="Q8L8W0-2"/>
    <property type="protein sequence ID" value="AT1G79450.2"/>
    <property type="gene ID" value="AT1G79450"/>
</dbReference>
<dbReference type="KEGG" id="ath:AT1G79450"/>
<dbReference type="Araport" id="AT1G79450"/>
<dbReference type="TAIR" id="AT1G79450">
    <property type="gene designation" value="ALIS5"/>
</dbReference>
<dbReference type="eggNOG" id="KOG2952">
    <property type="taxonomic scope" value="Eukaryota"/>
</dbReference>
<dbReference type="InParanoid" id="Q8L8W0"/>
<dbReference type="OMA" id="KICNRTI"/>
<dbReference type="OrthoDB" id="340608at2759"/>
<dbReference type="PhylomeDB" id="Q8L8W0"/>
<dbReference type="PRO" id="PR:Q8L8W0"/>
<dbReference type="Proteomes" id="UP000006548">
    <property type="component" value="Chromosome 1"/>
</dbReference>
<dbReference type="ExpressionAtlas" id="Q8L8W0">
    <property type="expression patterns" value="baseline and differential"/>
</dbReference>
<dbReference type="GO" id="GO:0005789">
    <property type="term" value="C:endoplasmic reticulum membrane"/>
    <property type="evidence" value="ECO:0007669"/>
    <property type="project" value="UniProtKB-SubCell"/>
</dbReference>
<dbReference type="GO" id="GO:0000139">
    <property type="term" value="C:Golgi membrane"/>
    <property type="evidence" value="ECO:0007669"/>
    <property type="project" value="UniProtKB-SubCell"/>
</dbReference>
<dbReference type="GO" id="GO:0005739">
    <property type="term" value="C:mitochondrion"/>
    <property type="evidence" value="ECO:0007005"/>
    <property type="project" value="TAIR"/>
</dbReference>
<dbReference type="InterPro" id="IPR005045">
    <property type="entry name" value="CDC50/LEM3_fam"/>
</dbReference>
<dbReference type="PANTHER" id="PTHR10926:SF50">
    <property type="entry name" value="ALA-INTERACTING SUBUNIT 5"/>
    <property type="match status" value="1"/>
</dbReference>
<dbReference type="PANTHER" id="PTHR10926">
    <property type="entry name" value="CELL CYCLE CONTROL PROTEIN 50"/>
    <property type="match status" value="1"/>
</dbReference>
<dbReference type="Pfam" id="PF03381">
    <property type="entry name" value="CDC50"/>
    <property type="match status" value="1"/>
</dbReference>
<dbReference type="PIRSF" id="PIRSF015840">
    <property type="entry name" value="DUF284_TM_euk"/>
    <property type="match status" value="1"/>
</dbReference>
<reference key="1">
    <citation type="journal article" date="2000" name="Nature">
        <title>Sequence and analysis of chromosome 1 of the plant Arabidopsis thaliana.</title>
        <authorList>
            <person name="Theologis A."/>
            <person name="Ecker J.R."/>
            <person name="Palm C.J."/>
            <person name="Federspiel N.A."/>
            <person name="Kaul S."/>
            <person name="White O."/>
            <person name="Alonso J."/>
            <person name="Altafi H."/>
            <person name="Araujo R."/>
            <person name="Bowman C.L."/>
            <person name="Brooks S.Y."/>
            <person name="Buehler E."/>
            <person name="Chan A."/>
            <person name="Chao Q."/>
            <person name="Chen H."/>
            <person name="Cheuk R.F."/>
            <person name="Chin C.W."/>
            <person name="Chung M.K."/>
            <person name="Conn L."/>
            <person name="Conway A.B."/>
            <person name="Conway A.R."/>
            <person name="Creasy T.H."/>
            <person name="Dewar K."/>
            <person name="Dunn P."/>
            <person name="Etgu P."/>
            <person name="Feldblyum T.V."/>
            <person name="Feng J.-D."/>
            <person name="Fong B."/>
            <person name="Fujii C.Y."/>
            <person name="Gill J.E."/>
            <person name="Goldsmith A.D."/>
            <person name="Haas B."/>
            <person name="Hansen N.F."/>
            <person name="Hughes B."/>
            <person name="Huizar L."/>
            <person name="Hunter J.L."/>
            <person name="Jenkins J."/>
            <person name="Johnson-Hopson C."/>
            <person name="Khan S."/>
            <person name="Khaykin E."/>
            <person name="Kim C.J."/>
            <person name="Koo H.L."/>
            <person name="Kremenetskaia I."/>
            <person name="Kurtz D.B."/>
            <person name="Kwan A."/>
            <person name="Lam B."/>
            <person name="Langin-Hooper S."/>
            <person name="Lee A."/>
            <person name="Lee J.M."/>
            <person name="Lenz C.A."/>
            <person name="Li J.H."/>
            <person name="Li Y.-P."/>
            <person name="Lin X."/>
            <person name="Liu S.X."/>
            <person name="Liu Z.A."/>
            <person name="Luros J.S."/>
            <person name="Maiti R."/>
            <person name="Marziali A."/>
            <person name="Militscher J."/>
            <person name="Miranda M."/>
            <person name="Nguyen M."/>
            <person name="Nierman W.C."/>
            <person name="Osborne B.I."/>
            <person name="Pai G."/>
            <person name="Peterson J."/>
            <person name="Pham P.K."/>
            <person name="Rizzo M."/>
            <person name="Rooney T."/>
            <person name="Rowley D."/>
            <person name="Sakano H."/>
            <person name="Salzberg S.L."/>
            <person name="Schwartz J.R."/>
            <person name="Shinn P."/>
            <person name="Southwick A.M."/>
            <person name="Sun H."/>
            <person name="Tallon L.J."/>
            <person name="Tambunga G."/>
            <person name="Toriumi M.J."/>
            <person name="Town C.D."/>
            <person name="Utterback T."/>
            <person name="Van Aken S."/>
            <person name="Vaysberg M."/>
            <person name="Vysotskaia V.S."/>
            <person name="Walker M."/>
            <person name="Wu D."/>
            <person name="Yu G."/>
            <person name="Fraser C.M."/>
            <person name="Venter J.C."/>
            <person name="Davis R.W."/>
        </authorList>
    </citation>
    <scope>NUCLEOTIDE SEQUENCE [LARGE SCALE GENOMIC DNA]</scope>
    <source>
        <strain>cv. Columbia</strain>
    </source>
</reference>
<reference key="2">
    <citation type="journal article" date="2017" name="Plant J.">
        <title>Araport11: a complete reannotation of the Arabidopsis thaliana reference genome.</title>
        <authorList>
            <person name="Cheng C.Y."/>
            <person name="Krishnakumar V."/>
            <person name="Chan A.P."/>
            <person name="Thibaud-Nissen F."/>
            <person name="Schobel S."/>
            <person name="Town C.D."/>
        </authorList>
    </citation>
    <scope>GENOME REANNOTATION</scope>
    <source>
        <strain>cv. Columbia</strain>
    </source>
</reference>
<reference key="3">
    <citation type="submission" date="2002-03" db="EMBL/GenBank/DDBJ databases">
        <title>Full-length cDNA from Arabidopsis thaliana.</title>
        <authorList>
            <person name="Brover V.V."/>
            <person name="Troukhan M.E."/>
            <person name="Alexandrov N.A."/>
            <person name="Lu Y.-P."/>
            <person name="Flavell R.B."/>
            <person name="Feldmann K.A."/>
        </authorList>
    </citation>
    <scope>NUCLEOTIDE SEQUENCE [LARGE SCALE MRNA] (ISOFORM 1)</scope>
</reference>
<reference key="4">
    <citation type="journal article" date="2004" name="Genome Res.">
        <title>Whole genome sequence comparisons and 'full-length' cDNA sequences: a combined approach to evaluate and improve Arabidopsis genome annotation.</title>
        <authorList>
            <person name="Castelli V."/>
            <person name="Aury J.-M."/>
            <person name="Jaillon O."/>
            <person name="Wincker P."/>
            <person name="Clepet C."/>
            <person name="Menard M."/>
            <person name="Cruaud C."/>
            <person name="Quetier F."/>
            <person name="Scarpelli C."/>
            <person name="Schaechter V."/>
            <person name="Temple G."/>
            <person name="Caboche M."/>
            <person name="Weissenbach J."/>
            <person name="Salanoubat M."/>
        </authorList>
    </citation>
    <scope>NUCLEOTIDE SEQUENCE [LARGE SCALE MRNA] (ISOFORM 2)</scope>
    <source>
        <strain>cv. Columbia</strain>
    </source>
</reference>
<reference key="5">
    <citation type="journal article" date="2008" name="Plant Cell">
        <title>The Arabidopsis P4-ATPase ALA3 localizes to the Golgi and requires a beta-subunit to function in lipid translocation and secretory vesicle formation.</title>
        <authorList>
            <person name="Poulsen L.R."/>
            <person name="Lopez-Marques R.L."/>
            <person name="McDowell S.C."/>
            <person name="Okkeri J."/>
            <person name="Licht D."/>
            <person name="Schulz A."/>
            <person name="Pomorski T."/>
            <person name="Harper J.F."/>
            <person name="Palmgren M.G."/>
        </authorList>
    </citation>
    <scope>TISSUE SPECIFICITY</scope>
    <scope>INTERACTION WITH ALA3</scope>
</reference>
<reference key="6">
    <citation type="journal article" date="2010" name="Mol. Biol. Cell">
        <title>Intracellular targeting signals and lipid specificity determinants of the ALA/ALIS P4-ATPase complex reside in the catalytic ALA alpha-subunit.</title>
        <authorList>
            <person name="Lopez-Marques R.L."/>
            <person name="Poulsen L.R."/>
            <person name="Hanisch S."/>
            <person name="Meffert K."/>
            <person name="Buch-Pedersen M.J."/>
            <person name="Jakobsen M.K."/>
            <person name="Pomorski T.G."/>
            <person name="Palmgren M.G."/>
        </authorList>
    </citation>
    <scope>FUNCTION</scope>
    <scope>SUBCELLULAR LOCATION</scope>
    <scope>INTERACTION WITH ALA2 AND ALA3</scope>
</reference>
<sequence>MSSTAASSTVGGGGSSEISGVKKTSKRPKYSRFTQQELPACKPILTPRWVILTFLVAGVVFIPLGVICLFASQGVVEIVDRYDTDCIPTSSRNNMVAYIQGEGDKICKRTITVTKAMKHPVYVYYQLENFYQNHRRYVKSRNDAQLRSPKEEHDVKTCAPEDNVGGEPIVPCGLVAWSLFNDTYSFSRNSQQLLVNKKGISWKSDRENKFGKNVFPKNFQKGAPIGGGTLNISKPLSEQEDLIVWMRTAALPTFRKLYGKIETDLHAGDTITVLLQNNYNTYSFNGQKKLVLSTTSWLGGRNDFLGIAYLTVGSICLFLAVTFAVLYLVKPRQLGDPSYLSWNRSAGGLQ</sequence>
<gene>
    <name type="primary">ALIS5</name>
    <name type="ordered locus">At1g79450</name>
    <name type="ORF">T8K14.13</name>
</gene>
<proteinExistence type="evidence at protein level"/>
<protein>
    <recommendedName>
        <fullName>ALA-interacting subunit 5</fullName>
        <shortName>AtALIS5</shortName>
    </recommendedName>
</protein>
<organism>
    <name type="scientific">Arabidopsis thaliana</name>
    <name type="common">Mouse-ear cress</name>
    <dbReference type="NCBI Taxonomy" id="3702"/>
    <lineage>
        <taxon>Eukaryota</taxon>
        <taxon>Viridiplantae</taxon>
        <taxon>Streptophyta</taxon>
        <taxon>Embryophyta</taxon>
        <taxon>Tracheophyta</taxon>
        <taxon>Spermatophyta</taxon>
        <taxon>Magnoliopsida</taxon>
        <taxon>eudicotyledons</taxon>
        <taxon>Gunneridae</taxon>
        <taxon>Pentapetalae</taxon>
        <taxon>rosids</taxon>
        <taxon>malvids</taxon>
        <taxon>Brassicales</taxon>
        <taxon>Brassicaceae</taxon>
        <taxon>Camelineae</taxon>
        <taxon>Arabidopsis</taxon>
    </lineage>
</organism>
<evidence type="ECO:0000250" key="1"/>
<evidence type="ECO:0000250" key="2">
    <source>
        <dbReference type="UniProtKB" id="Q9SLK2"/>
    </source>
</evidence>
<evidence type="ECO:0000255" key="3"/>
<evidence type="ECO:0000256" key="4">
    <source>
        <dbReference type="SAM" id="MobiDB-lite"/>
    </source>
</evidence>
<evidence type="ECO:0000269" key="5">
    <source>
    </source>
</evidence>
<evidence type="ECO:0000269" key="6">
    <source>
    </source>
</evidence>
<evidence type="ECO:0000303" key="7">
    <source>
    </source>
</evidence>
<evidence type="ECO:0000305" key="8"/>
<feature type="initiator methionine" description="Removed" evidence="2">
    <location>
        <position position="1"/>
    </location>
</feature>
<feature type="chain" id="PRO_0000366958" description="ALA-interacting subunit 5">
    <location>
        <begin position="2"/>
        <end position="350"/>
    </location>
</feature>
<feature type="transmembrane region" description="Helical" evidence="3">
    <location>
        <begin position="50"/>
        <end position="70"/>
    </location>
</feature>
<feature type="transmembrane region" description="Helical" evidence="3">
    <location>
        <begin position="304"/>
        <end position="324"/>
    </location>
</feature>
<feature type="region of interest" description="Disordered" evidence="4">
    <location>
        <begin position="1"/>
        <end position="23"/>
    </location>
</feature>
<feature type="modified residue" description="N-acetylserine" evidence="2">
    <location>
        <position position="2"/>
    </location>
</feature>
<feature type="glycosylation site" description="N-linked (GlcNAc...) asparagine" evidence="3">
    <location>
        <position position="181"/>
    </location>
</feature>
<feature type="glycosylation site" description="N-linked (GlcNAc...) asparagine" evidence="3">
    <location>
        <position position="231"/>
    </location>
</feature>
<feature type="splice variant" id="VSP_036590" description="In isoform 2." evidence="7">
    <location>
        <begin position="1"/>
        <end position="67"/>
    </location>
</feature>
<feature type="splice variant" id="VSP_036591" description="In isoform 2." evidence="7">
    <original>CLFASQG</original>
    <variation>MFHSYLK</variation>
    <location>
        <begin position="68"/>
        <end position="74"/>
    </location>
</feature>
<feature type="sequence conflict" description="In Ref. 4; BX816946." evidence="8" ref="4">
    <original>V</original>
    <variation>F</variation>
    <location>
        <position position="79"/>
    </location>
</feature>
<accession>Q8L8W0</accession>
<accession>Q9SAK3</accession>